<reference key="1">
    <citation type="journal article" date="2008" name="Proc. Natl. Acad. Sci. U.S.A.">
        <title>Niche adaptation and genome expansion in the chlorophyll d-producing cyanobacterium Acaryochloris marina.</title>
        <authorList>
            <person name="Swingley W.D."/>
            <person name="Chen M."/>
            <person name="Cheung P.C."/>
            <person name="Conrad A.L."/>
            <person name="Dejesa L.C."/>
            <person name="Hao J."/>
            <person name="Honchak B.M."/>
            <person name="Karbach L.E."/>
            <person name="Kurdoglu A."/>
            <person name="Lahiri S."/>
            <person name="Mastrian S.D."/>
            <person name="Miyashita H."/>
            <person name="Page L."/>
            <person name="Ramakrishna P."/>
            <person name="Satoh S."/>
            <person name="Sattley W.M."/>
            <person name="Shimada Y."/>
            <person name="Taylor H.L."/>
            <person name="Tomo T."/>
            <person name="Tsuchiya T."/>
            <person name="Wang Z.T."/>
            <person name="Raymond J."/>
            <person name="Mimuro M."/>
            <person name="Blankenship R.E."/>
            <person name="Touchman J.W."/>
        </authorList>
    </citation>
    <scope>NUCLEOTIDE SEQUENCE [LARGE SCALE GENOMIC DNA]</scope>
    <source>
        <strain>MBIC 11017</strain>
    </source>
</reference>
<feature type="chain" id="PRO_1000076500" description="Elongation factor P">
    <location>
        <begin position="1"/>
        <end position="185"/>
    </location>
</feature>
<sequence length="185" mass="20546">MISSNDFRTGVSIELDGSVWRVVEFLHVKPGKGSAFVRTKLKNVQSGSVVERTFRAGETVPQANLEKRVMQHTYKDGDQFVFMDMESYEEASLSQEQIGTRVKYLKEGMEVNVIQWGEQVLEVELPTSVVLEVTQTDPGVKGDTATGGSKPAIVETGAQVMVPLFISEGERIKVDTRNDSYLGRE</sequence>
<name>EFP_ACAM1</name>
<organism>
    <name type="scientific">Acaryochloris marina (strain MBIC 11017)</name>
    <dbReference type="NCBI Taxonomy" id="329726"/>
    <lineage>
        <taxon>Bacteria</taxon>
        <taxon>Bacillati</taxon>
        <taxon>Cyanobacteriota</taxon>
        <taxon>Cyanophyceae</taxon>
        <taxon>Acaryochloridales</taxon>
        <taxon>Acaryochloridaceae</taxon>
        <taxon>Acaryochloris</taxon>
    </lineage>
</organism>
<dbReference type="EMBL" id="CP000828">
    <property type="protein sequence ID" value="ABW28919.1"/>
    <property type="molecule type" value="Genomic_DNA"/>
</dbReference>
<dbReference type="RefSeq" id="WP_010475096.1">
    <property type="nucleotide sequence ID" value="NC_009925.1"/>
</dbReference>
<dbReference type="SMR" id="B0C899"/>
<dbReference type="STRING" id="329726.AM1_3934"/>
<dbReference type="KEGG" id="amr:AM1_3934"/>
<dbReference type="eggNOG" id="COG0231">
    <property type="taxonomic scope" value="Bacteria"/>
</dbReference>
<dbReference type="HOGENOM" id="CLU_074944_0_1_3"/>
<dbReference type="OrthoDB" id="9801844at2"/>
<dbReference type="UniPathway" id="UPA00345"/>
<dbReference type="Proteomes" id="UP000000268">
    <property type="component" value="Chromosome"/>
</dbReference>
<dbReference type="GO" id="GO:0005737">
    <property type="term" value="C:cytoplasm"/>
    <property type="evidence" value="ECO:0007669"/>
    <property type="project" value="UniProtKB-SubCell"/>
</dbReference>
<dbReference type="GO" id="GO:0003746">
    <property type="term" value="F:translation elongation factor activity"/>
    <property type="evidence" value="ECO:0007669"/>
    <property type="project" value="UniProtKB-UniRule"/>
</dbReference>
<dbReference type="GO" id="GO:0043043">
    <property type="term" value="P:peptide biosynthetic process"/>
    <property type="evidence" value="ECO:0007669"/>
    <property type="project" value="InterPro"/>
</dbReference>
<dbReference type="CDD" id="cd04470">
    <property type="entry name" value="S1_EF-P_repeat_1"/>
    <property type="match status" value="1"/>
</dbReference>
<dbReference type="CDD" id="cd05794">
    <property type="entry name" value="S1_EF-P_repeat_2"/>
    <property type="match status" value="1"/>
</dbReference>
<dbReference type="FunFam" id="2.30.30.30:FF:000003">
    <property type="entry name" value="Elongation factor P"/>
    <property type="match status" value="1"/>
</dbReference>
<dbReference type="FunFam" id="2.40.50.140:FF:000004">
    <property type="entry name" value="Elongation factor P"/>
    <property type="match status" value="1"/>
</dbReference>
<dbReference type="FunFam" id="2.40.50.140:FF:000009">
    <property type="entry name" value="Elongation factor P"/>
    <property type="match status" value="1"/>
</dbReference>
<dbReference type="Gene3D" id="2.30.30.30">
    <property type="match status" value="1"/>
</dbReference>
<dbReference type="Gene3D" id="2.40.50.140">
    <property type="entry name" value="Nucleic acid-binding proteins"/>
    <property type="match status" value="2"/>
</dbReference>
<dbReference type="HAMAP" id="MF_00141">
    <property type="entry name" value="EF_P"/>
    <property type="match status" value="1"/>
</dbReference>
<dbReference type="InterPro" id="IPR015365">
    <property type="entry name" value="Elong-fact-P_C"/>
</dbReference>
<dbReference type="InterPro" id="IPR012340">
    <property type="entry name" value="NA-bd_OB-fold"/>
</dbReference>
<dbReference type="InterPro" id="IPR014722">
    <property type="entry name" value="Rib_uL2_dom2"/>
</dbReference>
<dbReference type="InterPro" id="IPR020599">
    <property type="entry name" value="Transl_elong_fac_P/YeiP"/>
</dbReference>
<dbReference type="InterPro" id="IPR013185">
    <property type="entry name" value="Transl_elong_KOW-like"/>
</dbReference>
<dbReference type="InterPro" id="IPR001059">
    <property type="entry name" value="Transl_elong_P/YeiP_cen"/>
</dbReference>
<dbReference type="InterPro" id="IPR013852">
    <property type="entry name" value="Transl_elong_P/YeiP_CS"/>
</dbReference>
<dbReference type="InterPro" id="IPR011768">
    <property type="entry name" value="Transl_elongation_fac_P"/>
</dbReference>
<dbReference type="InterPro" id="IPR008991">
    <property type="entry name" value="Translation_prot_SH3-like_sf"/>
</dbReference>
<dbReference type="NCBIfam" id="TIGR00038">
    <property type="entry name" value="efp"/>
    <property type="match status" value="1"/>
</dbReference>
<dbReference type="NCBIfam" id="NF001810">
    <property type="entry name" value="PRK00529.1"/>
    <property type="match status" value="1"/>
</dbReference>
<dbReference type="PANTHER" id="PTHR30053">
    <property type="entry name" value="ELONGATION FACTOR P"/>
    <property type="match status" value="1"/>
</dbReference>
<dbReference type="PANTHER" id="PTHR30053:SF12">
    <property type="entry name" value="ELONGATION FACTOR P (EF-P) FAMILY PROTEIN"/>
    <property type="match status" value="1"/>
</dbReference>
<dbReference type="Pfam" id="PF01132">
    <property type="entry name" value="EFP"/>
    <property type="match status" value="1"/>
</dbReference>
<dbReference type="Pfam" id="PF08207">
    <property type="entry name" value="EFP_N"/>
    <property type="match status" value="1"/>
</dbReference>
<dbReference type="Pfam" id="PF09285">
    <property type="entry name" value="Elong-fact-P_C"/>
    <property type="match status" value="1"/>
</dbReference>
<dbReference type="PIRSF" id="PIRSF005901">
    <property type="entry name" value="EF-P"/>
    <property type="match status" value="1"/>
</dbReference>
<dbReference type="SMART" id="SM01185">
    <property type="entry name" value="EFP"/>
    <property type="match status" value="1"/>
</dbReference>
<dbReference type="SMART" id="SM00841">
    <property type="entry name" value="Elong-fact-P_C"/>
    <property type="match status" value="1"/>
</dbReference>
<dbReference type="SUPFAM" id="SSF50249">
    <property type="entry name" value="Nucleic acid-binding proteins"/>
    <property type="match status" value="2"/>
</dbReference>
<dbReference type="SUPFAM" id="SSF50104">
    <property type="entry name" value="Translation proteins SH3-like domain"/>
    <property type="match status" value="1"/>
</dbReference>
<dbReference type="PROSITE" id="PS01275">
    <property type="entry name" value="EFP"/>
    <property type="match status" value="1"/>
</dbReference>
<gene>
    <name evidence="1" type="primary">efp</name>
    <name type="ordered locus">AM1_3934</name>
</gene>
<accession>B0C899</accession>
<proteinExistence type="inferred from homology"/>
<protein>
    <recommendedName>
        <fullName evidence="1">Elongation factor P</fullName>
        <shortName evidence="1">EF-P</shortName>
    </recommendedName>
</protein>
<evidence type="ECO:0000255" key="1">
    <source>
        <dbReference type="HAMAP-Rule" id="MF_00141"/>
    </source>
</evidence>
<comment type="function">
    <text evidence="1">Involved in peptide bond synthesis. Stimulates efficient translation and peptide-bond synthesis on native or reconstituted 70S ribosomes in vitro. Probably functions indirectly by altering the affinity of the ribosome for aminoacyl-tRNA, thus increasing their reactivity as acceptors for peptidyl transferase.</text>
</comment>
<comment type="pathway">
    <text evidence="1">Protein biosynthesis; polypeptide chain elongation.</text>
</comment>
<comment type="subcellular location">
    <subcellularLocation>
        <location evidence="1">Cytoplasm</location>
    </subcellularLocation>
</comment>
<comment type="similarity">
    <text evidence="1">Belongs to the elongation factor P family.</text>
</comment>
<keyword id="KW-0963">Cytoplasm</keyword>
<keyword id="KW-0251">Elongation factor</keyword>
<keyword id="KW-0648">Protein biosynthesis</keyword>
<keyword id="KW-1185">Reference proteome</keyword>